<accession>P69259</accession>
<accession>P21432</accession>
<accession>Q540C9</accession>
<reference key="1">
    <citation type="journal article" date="1988" name="Virology">
        <title>Identification of sequence changes in the cold-adapted, live attenuated influenza vaccine strain, A/Ann Arbor/6/60 (H2N2).</title>
        <authorList>
            <person name="Cox N.J."/>
            <person name="Kitame F."/>
            <person name="Kendal A.P."/>
            <person name="Maassab H.F."/>
            <person name="Naeve C."/>
        </authorList>
    </citation>
    <scope>NUCLEOTIDE SEQUENCE [GENOMIC RNA]</scope>
</reference>
<reference key="2">
    <citation type="journal article" date="2004" name="Virology">
        <title>Genetic analysis of human H2N2 and early H3N2 influenza viruses, 1957-1972: evidence for genetic divergence and multiple reassortment events.</title>
        <authorList>
            <person name="Lindstrom S.E."/>
            <person name="Cox N.J."/>
            <person name="Klimov A."/>
        </authorList>
    </citation>
    <scope>NUCLEOTIDE SEQUENCE [GENOMIC RNA]</scope>
</reference>
<proteinExistence type="inferred from homology"/>
<organismHost>
    <name type="scientific">Aves</name>
    <dbReference type="NCBI Taxonomy" id="8782"/>
</organismHost>
<organismHost>
    <name type="scientific">Homo sapiens</name>
    <name type="common">Human</name>
    <dbReference type="NCBI Taxonomy" id="9606"/>
</organismHost>
<gene>
    <name evidence="1" type="primary">NS</name>
</gene>
<dbReference type="EMBL" id="M23968">
    <property type="protein sequence ID" value="AAA43552.1"/>
    <property type="molecule type" value="Genomic_RNA"/>
</dbReference>
<dbReference type="EMBL" id="AY210161">
    <property type="protein sequence ID" value="AAO46588.1"/>
    <property type="molecule type" value="Genomic_RNA"/>
</dbReference>
<dbReference type="SMR" id="P69259"/>
<dbReference type="GO" id="GO:0042025">
    <property type="term" value="C:host cell nucleus"/>
    <property type="evidence" value="ECO:0007669"/>
    <property type="project" value="UniProtKB-SubCell"/>
</dbReference>
<dbReference type="GO" id="GO:0044423">
    <property type="term" value="C:virion component"/>
    <property type="evidence" value="ECO:0007669"/>
    <property type="project" value="UniProtKB-UniRule"/>
</dbReference>
<dbReference type="GO" id="GO:0039675">
    <property type="term" value="P:exit of virus from host cell nucleus through nuclear pore"/>
    <property type="evidence" value="ECO:0007669"/>
    <property type="project" value="UniProtKB-UniRule"/>
</dbReference>
<dbReference type="Gene3D" id="1.10.287.230">
    <property type="match status" value="1"/>
</dbReference>
<dbReference type="Gene3D" id="1.10.287.10">
    <property type="entry name" value="S15/NS1, RNA-binding"/>
    <property type="match status" value="1"/>
</dbReference>
<dbReference type="HAMAP" id="MF_04067">
    <property type="entry name" value="INFV_NEP"/>
    <property type="match status" value="1"/>
</dbReference>
<dbReference type="InterPro" id="IPR000968">
    <property type="entry name" value="Flu_NS2"/>
</dbReference>
<dbReference type="Pfam" id="PF00601">
    <property type="entry name" value="Flu_NS2"/>
    <property type="match status" value="1"/>
</dbReference>
<dbReference type="SUPFAM" id="SSF101156">
    <property type="entry name" value="Nonstructural protein ns2, Nep, M1-binding domain"/>
    <property type="match status" value="1"/>
</dbReference>
<feature type="chain" id="PRO_0000078976" description="Nuclear export protein">
    <location>
        <begin position="1"/>
        <end position="121"/>
    </location>
</feature>
<feature type="short sequence motif" description="Nuclear export signal" evidence="1">
    <location>
        <begin position="12"/>
        <end position="21"/>
    </location>
</feature>
<feature type="short sequence motif" description="Nuclear export signal" evidence="1">
    <location>
        <begin position="85"/>
        <end position="94"/>
    </location>
</feature>
<sequence>MDPNTVSSFQDILMRMSKMQLGSSSEDLNGMITQFESLKLYRDSLGEAVMRMGDLHSLQNRNGKWREQLGQKFEEIRWLIEEVRHKLKITENSFEQITFMQALQLLFEVEQEIRTFSFQLI</sequence>
<comment type="function">
    <text evidence="1">Mediates the nuclear export of encapsidated genomic RNAs (ribonucleoproteins, RNPs). Acts as an adapter between viral RNPs complexes and the nuclear export machinery of the cell. Possesses no intrinsic RNA-binding activity, but includes a C-terminal M1-binding domain. This domain is believed to allow recognition of RNPs bound to the protein M1. Since protein M1 is not available in large quantities before late stages of infection, such an indirect recognition mechanism probably ensures that genomic RNPs are not exported from the host nucleus until sufficient quantities of viral mRNA and progeny genomic RNA have been synthesized. Furthermore, the RNPs enter the host cytoplasm only when associated with the M1 protein that is necessary to guide them to the plasma membrane. May down-regulate viral RNA synthesis when overproduced.</text>
</comment>
<comment type="subunit">
    <text evidence="1">Interacts with protein M1. May interact with host nucleoporin RAB/HRB and exportin XPO1/CRM1.</text>
</comment>
<comment type="subcellular location">
    <subcellularLocation>
        <location evidence="1">Virion</location>
    </subcellularLocation>
    <subcellularLocation>
        <location evidence="1">Host nucleus</location>
    </subcellularLocation>
</comment>
<comment type="alternative products">
    <event type="alternative splicing"/>
    <isoform>
        <id>P69259-1</id>
        <name>NEP</name>
        <name>NS2</name>
        <sequence type="displayed"/>
    </isoform>
    <isoform>
        <id>P21431-1</id>
        <name>NS1</name>
        <sequence type="external"/>
    </isoform>
</comment>
<comment type="miscellaneous">
    <text>Average number present in a viral particle is estimated to be 130-200 molecules.</text>
</comment>
<comment type="similarity">
    <text evidence="1">Belongs to the influenza viruses NEP family.</text>
</comment>
<evidence type="ECO:0000255" key="1">
    <source>
        <dbReference type="HAMAP-Rule" id="MF_04067"/>
    </source>
</evidence>
<name>NEP_I60A0</name>
<organism>
    <name type="scientific">Influenza A virus (strain A/Ann Arbor/6/1960 H2N2)</name>
    <dbReference type="NCBI Taxonomy" id="384498"/>
    <lineage>
        <taxon>Viruses</taxon>
        <taxon>Riboviria</taxon>
        <taxon>Orthornavirae</taxon>
        <taxon>Negarnaviricota</taxon>
        <taxon>Polyploviricotina</taxon>
        <taxon>Insthoviricetes</taxon>
        <taxon>Articulavirales</taxon>
        <taxon>Orthomyxoviridae</taxon>
        <taxon>Alphainfluenzavirus</taxon>
        <taxon>Alphainfluenzavirus influenzae</taxon>
        <taxon>Influenza A virus</taxon>
    </lineage>
</organism>
<protein>
    <recommendedName>
        <fullName evidence="1">Nuclear export protein</fullName>
        <shortName evidence="1">NEP</shortName>
    </recommendedName>
    <alternativeName>
        <fullName evidence="1">Non-structural protein 2</fullName>
        <shortName evidence="1">NS2</shortName>
    </alternativeName>
</protein>
<keyword id="KW-0025">Alternative splicing</keyword>
<keyword id="KW-1048">Host nucleus</keyword>
<keyword id="KW-0945">Host-virus interaction</keyword>
<keyword id="KW-0813">Transport</keyword>
<keyword id="KW-0946">Virion</keyword>